<sequence length="159" mass="17730">MNLRRKNRLWVVCAVLAGLALTTALVLYALRANIDLFYTPGEILYGKRETQQLPAVGQRLRVGGMVMPGSVRRDPDSLKVNFSLYDAEGSVTVSYEGILPDLFREGQGVVVQGTLEKGNHVLAHEVLAKHDENYTPPEVEKAMQENHRRPQRADKDTSS</sequence>
<name>CCME_SALTI</name>
<accession>Q8XEN3</accession>
<accession>Q7CB56</accession>
<dbReference type="EMBL" id="AL513382">
    <property type="protein sequence ID" value="CAD07482.1"/>
    <property type="molecule type" value="Genomic_DNA"/>
</dbReference>
<dbReference type="EMBL" id="AL513382">
    <property type="protein sequence ID" value="CAD03179.1"/>
    <property type="molecule type" value="Genomic_DNA"/>
</dbReference>
<dbReference type="EMBL" id="AE014613">
    <property type="protein sequence ID" value="AAO71198.1"/>
    <property type="molecule type" value="Genomic_DNA"/>
</dbReference>
<dbReference type="EMBL" id="AE014613">
    <property type="protein sequence ID" value="AAO68319.1"/>
    <property type="molecule type" value="Genomic_DNA"/>
</dbReference>
<dbReference type="RefSeq" id="NP_456795.1">
    <property type="nucleotide sequence ID" value="NC_003198.1"/>
</dbReference>
<dbReference type="RefSeq" id="NP_458124.1">
    <property type="nucleotide sequence ID" value="NC_003198.1"/>
</dbReference>
<dbReference type="SMR" id="Q8XEN3"/>
<dbReference type="STRING" id="220341.gene:17586378"/>
<dbReference type="KEGG" id="stt:t0614"/>
<dbReference type="KEGG" id="stt:t3703"/>
<dbReference type="KEGG" id="sty:STY2476"/>
<dbReference type="KEGG" id="sty:STY3963"/>
<dbReference type="PATRIC" id="fig|220341.7.peg.2507"/>
<dbReference type="eggNOG" id="COG2332">
    <property type="taxonomic scope" value="Bacteria"/>
</dbReference>
<dbReference type="HOGENOM" id="CLU_079503_1_0_6"/>
<dbReference type="OMA" id="HVEFAVH"/>
<dbReference type="OrthoDB" id="9793584at2"/>
<dbReference type="Proteomes" id="UP000000541">
    <property type="component" value="Chromosome"/>
</dbReference>
<dbReference type="Proteomes" id="UP000002670">
    <property type="component" value="Chromosome"/>
</dbReference>
<dbReference type="GO" id="GO:0005886">
    <property type="term" value="C:plasma membrane"/>
    <property type="evidence" value="ECO:0007669"/>
    <property type="project" value="UniProtKB-SubCell"/>
</dbReference>
<dbReference type="GO" id="GO:0020037">
    <property type="term" value="F:heme binding"/>
    <property type="evidence" value="ECO:0007669"/>
    <property type="project" value="InterPro"/>
</dbReference>
<dbReference type="GO" id="GO:0046872">
    <property type="term" value="F:metal ion binding"/>
    <property type="evidence" value="ECO:0007669"/>
    <property type="project" value="UniProtKB-KW"/>
</dbReference>
<dbReference type="GO" id="GO:0017004">
    <property type="term" value="P:cytochrome complex assembly"/>
    <property type="evidence" value="ECO:0007669"/>
    <property type="project" value="UniProtKB-KW"/>
</dbReference>
<dbReference type="FunFam" id="2.40.50.140:FF:000104">
    <property type="entry name" value="Cytochrome c-type biogenesis protein CcmE"/>
    <property type="match status" value="1"/>
</dbReference>
<dbReference type="Gene3D" id="2.40.50.140">
    <property type="entry name" value="Nucleic acid-binding proteins"/>
    <property type="match status" value="1"/>
</dbReference>
<dbReference type="HAMAP" id="MF_01959">
    <property type="entry name" value="CcmE"/>
    <property type="match status" value="1"/>
</dbReference>
<dbReference type="InterPro" id="IPR004329">
    <property type="entry name" value="CcmE"/>
</dbReference>
<dbReference type="InterPro" id="IPR036127">
    <property type="entry name" value="CcmE-like_sf"/>
</dbReference>
<dbReference type="InterPro" id="IPR012340">
    <property type="entry name" value="NA-bd_OB-fold"/>
</dbReference>
<dbReference type="NCBIfam" id="NF009635">
    <property type="entry name" value="PRK13150.1"/>
    <property type="match status" value="1"/>
</dbReference>
<dbReference type="NCBIfam" id="NF009638">
    <property type="entry name" value="PRK13165.1"/>
    <property type="match status" value="1"/>
</dbReference>
<dbReference type="NCBIfam" id="NF009727">
    <property type="entry name" value="PRK13254.1-1"/>
    <property type="match status" value="1"/>
</dbReference>
<dbReference type="NCBIfam" id="NF009729">
    <property type="entry name" value="PRK13254.1-3"/>
    <property type="match status" value="1"/>
</dbReference>
<dbReference type="PANTHER" id="PTHR34128">
    <property type="entry name" value="CYTOCHROME C-TYPE BIOGENESIS PROTEIN CCME HOMOLOG, MITOCHONDRIAL"/>
    <property type="match status" value="1"/>
</dbReference>
<dbReference type="PANTHER" id="PTHR34128:SF2">
    <property type="entry name" value="CYTOCHROME C-TYPE BIOGENESIS PROTEIN CCME HOMOLOG, MITOCHONDRIAL"/>
    <property type="match status" value="1"/>
</dbReference>
<dbReference type="Pfam" id="PF03100">
    <property type="entry name" value="CcmE"/>
    <property type="match status" value="1"/>
</dbReference>
<dbReference type="SUPFAM" id="SSF82093">
    <property type="entry name" value="Heme chaperone CcmE"/>
    <property type="match status" value="1"/>
</dbReference>
<feature type="chain" id="PRO_0000238862" description="Cytochrome c-type biogenesis protein CcmE">
    <location>
        <begin position="1"/>
        <end position="159"/>
    </location>
</feature>
<feature type="topological domain" description="Cytoplasmic" evidence="1">
    <location>
        <begin position="1"/>
        <end position="8"/>
    </location>
</feature>
<feature type="transmembrane region" description="Helical; Signal-anchor for type II membrane protein" evidence="1">
    <location>
        <begin position="9"/>
        <end position="29"/>
    </location>
</feature>
<feature type="topological domain" description="Periplasmic" evidence="1">
    <location>
        <begin position="30"/>
        <end position="159"/>
    </location>
</feature>
<feature type="region of interest" description="Disordered" evidence="2">
    <location>
        <begin position="129"/>
        <end position="159"/>
    </location>
</feature>
<feature type="binding site" description="covalent" evidence="1">
    <location>
        <position position="130"/>
    </location>
    <ligand>
        <name>heme</name>
        <dbReference type="ChEBI" id="CHEBI:30413"/>
    </ligand>
</feature>
<feature type="binding site" description="axial binding residue" evidence="1">
    <location>
        <position position="134"/>
    </location>
    <ligand>
        <name>heme</name>
        <dbReference type="ChEBI" id="CHEBI:30413"/>
    </ligand>
    <ligandPart>
        <name>Fe</name>
        <dbReference type="ChEBI" id="CHEBI:18248"/>
    </ligandPart>
</feature>
<evidence type="ECO:0000255" key="1">
    <source>
        <dbReference type="HAMAP-Rule" id="MF_01959"/>
    </source>
</evidence>
<evidence type="ECO:0000256" key="2">
    <source>
        <dbReference type="SAM" id="MobiDB-lite"/>
    </source>
</evidence>
<gene>
    <name evidence="1" type="primary">ccmE1</name>
    <name evidence="1" type="synonym">cycJ1</name>
    <name type="ordered locus">STY2476</name>
    <name type="ordered locus">t0614</name>
</gene>
<gene>
    <name evidence="1" type="primary">ccmE2</name>
    <name evidence="1" type="synonym">cycJ2</name>
    <name type="ordered locus">STY3963</name>
    <name type="ordered locus">t3703</name>
</gene>
<organism>
    <name type="scientific">Salmonella typhi</name>
    <dbReference type="NCBI Taxonomy" id="90370"/>
    <lineage>
        <taxon>Bacteria</taxon>
        <taxon>Pseudomonadati</taxon>
        <taxon>Pseudomonadota</taxon>
        <taxon>Gammaproteobacteria</taxon>
        <taxon>Enterobacterales</taxon>
        <taxon>Enterobacteriaceae</taxon>
        <taxon>Salmonella</taxon>
    </lineage>
</organism>
<comment type="function">
    <text evidence="1">Heme chaperone required for the biogenesis of c-type cytochromes. Transiently binds heme delivered by CcmC and transfers the heme to apo-cytochromes in a process facilitated by CcmF and CcmH.</text>
</comment>
<comment type="subcellular location">
    <subcellularLocation>
        <location evidence="1">Cell inner membrane</location>
        <topology evidence="1">Single-pass type II membrane protein</topology>
        <orientation evidence="1">Periplasmic side</orientation>
    </subcellularLocation>
</comment>
<comment type="similarity">
    <text evidence="1">Belongs to the CcmE/CycJ family.</text>
</comment>
<reference key="1">
    <citation type="journal article" date="2001" name="Nature">
        <title>Complete genome sequence of a multiple drug resistant Salmonella enterica serovar Typhi CT18.</title>
        <authorList>
            <person name="Parkhill J."/>
            <person name="Dougan G."/>
            <person name="James K.D."/>
            <person name="Thomson N.R."/>
            <person name="Pickard D."/>
            <person name="Wain J."/>
            <person name="Churcher C.M."/>
            <person name="Mungall K.L."/>
            <person name="Bentley S.D."/>
            <person name="Holden M.T.G."/>
            <person name="Sebaihia M."/>
            <person name="Baker S."/>
            <person name="Basham D."/>
            <person name="Brooks K."/>
            <person name="Chillingworth T."/>
            <person name="Connerton P."/>
            <person name="Cronin A."/>
            <person name="Davis P."/>
            <person name="Davies R.M."/>
            <person name="Dowd L."/>
            <person name="White N."/>
            <person name="Farrar J."/>
            <person name="Feltwell T."/>
            <person name="Hamlin N."/>
            <person name="Haque A."/>
            <person name="Hien T.T."/>
            <person name="Holroyd S."/>
            <person name="Jagels K."/>
            <person name="Krogh A."/>
            <person name="Larsen T.S."/>
            <person name="Leather S."/>
            <person name="Moule S."/>
            <person name="O'Gaora P."/>
            <person name="Parry C."/>
            <person name="Quail M.A."/>
            <person name="Rutherford K.M."/>
            <person name="Simmonds M."/>
            <person name="Skelton J."/>
            <person name="Stevens K."/>
            <person name="Whitehead S."/>
            <person name="Barrell B.G."/>
        </authorList>
    </citation>
    <scope>NUCLEOTIDE SEQUENCE [LARGE SCALE GENOMIC DNA]</scope>
    <source>
        <strain>CT18</strain>
    </source>
</reference>
<reference key="2">
    <citation type="journal article" date="2003" name="J. Bacteriol.">
        <title>Comparative genomics of Salmonella enterica serovar Typhi strains Ty2 and CT18.</title>
        <authorList>
            <person name="Deng W."/>
            <person name="Liou S.-R."/>
            <person name="Plunkett G. III"/>
            <person name="Mayhew G.F."/>
            <person name="Rose D.J."/>
            <person name="Burland V."/>
            <person name="Kodoyianni V."/>
            <person name="Schwartz D.C."/>
            <person name="Blattner F.R."/>
        </authorList>
    </citation>
    <scope>NUCLEOTIDE SEQUENCE [LARGE SCALE GENOMIC DNA]</scope>
    <source>
        <strain>ATCC 700931 / Ty2</strain>
    </source>
</reference>
<proteinExistence type="inferred from homology"/>
<keyword id="KW-0997">Cell inner membrane</keyword>
<keyword id="KW-1003">Cell membrane</keyword>
<keyword id="KW-0201">Cytochrome c-type biogenesis</keyword>
<keyword id="KW-0349">Heme</keyword>
<keyword id="KW-0408">Iron</keyword>
<keyword id="KW-0472">Membrane</keyword>
<keyword id="KW-0479">Metal-binding</keyword>
<keyword id="KW-0735">Signal-anchor</keyword>
<keyword id="KW-0812">Transmembrane</keyword>
<keyword id="KW-1133">Transmembrane helix</keyword>
<protein>
    <recommendedName>
        <fullName evidence="1">Cytochrome c-type biogenesis protein CcmE</fullName>
    </recommendedName>
    <alternativeName>
        <fullName evidence="1">Cytochrome c maturation protein E</fullName>
    </alternativeName>
    <alternativeName>
        <fullName evidence="1">Heme chaperone CcmE</fullName>
    </alternativeName>
</protein>